<feature type="chain" id="PRO_1000202656" description="Phosphomethylpyrimidine synthase">
    <location>
        <begin position="1"/>
        <end position="433"/>
    </location>
</feature>
<feature type="binding site" evidence="1">
    <location>
        <position position="66"/>
    </location>
    <ligand>
        <name>substrate</name>
    </ligand>
</feature>
<feature type="binding site" evidence="1">
    <location>
        <position position="94"/>
    </location>
    <ligand>
        <name>substrate</name>
    </ligand>
</feature>
<feature type="binding site" evidence="1">
    <location>
        <position position="123"/>
    </location>
    <ligand>
        <name>substrate</name>
    </ligand>
</feature>
<feature type="binding site" evidence="1">
    <location>
        <position position="162"/>
    </location>
    <ligand>
        <name>substrate</name>
    </ligand>
</feature>
<feature type="binding site" evidence="1">
    <location>
        <begin position="184"/>
        <end position="186"/>
    </location>
    <ligand>
        <name>substrate</name>
    </ligand>
</feature>
<feature type="binding site" evidence="1">
    <location>
        <begin position="225"/>
        <end position="228"/>
    </location>
    <ligand>
        <name>substrate</name>
    </ligand>
</feature>
<feature type="binding site" evidence="1">
    <location>
        <position position="264"/>
    </location>
    <ligand>
        <name>substrate</name>
    </ligand>
</feature>
<feature type="binding site" evidence="1">
    <location>
        <position position="268"/>
    </location>
    <ligand>
        <name>Zn(2+)</name>
        <dbReference type="ChEBI" id="CHEBI:29105"/>
    </ligand>
</feature>
<feature type="binding site" evidence="1">
    <location>
        <position position="291"/>
    </location>
    <ligand>
        <name>substrate</name>
    </ligand>
</feature>
<feature type="binding site" evidence="1">
    <location>
        <position position="332"/>
    </location>
    <ligand>
        <name>Zn(2+)</name>
        <dbReference type="ChEBI" id="CHEBI:29105"/>
    </ligand>
</feature>
<feature type="binding site" evidence="1">
    <location>
        <position position="408"/>
    </location>
    <ligand>
        <name>[4Fe-4S] cluster</name>
        <dbReference type="ChEBI" id="CHEBI:49883"/>
        <note>4Fe-4S-S-AdoMet</note>
    </ligand>
</feature>
<feature type="binding site" evidence="1">
    <location>
        <position position="411"/>
    </location>
    <ligand>
        <name>[4Fe-4S] cluster</name>
        <dbReference type="ChEBI" id="CHEBI:49883"/>
        <note>4Fe-4S-S-AdoMet</note>
    </ligand>
</feature>
<feature type="binding site" evidence="1">
    <location>
        <position position="415"/>
    </location>
    <ligand>
        <name>[4Fe-4S] cluster</name>
        <dbReference type="ChEBI" id="CHEBI:49883"/>
        <note>4Fe-4S-S-AdoMet</note>
    </ligand>
</feature>
<accession>C3MX60</accession>
<keyword id="KW-0004">4Fe-4S</keyword>
<keyword id="KW-0408">Iron</keyword>
<keyword id="KW-0411">Iron-sulfur</keyword>
<keyword id="KW-0456">Lyase</keyword>
<keyword id="KW-0479">Metal-binding</keyword>
<keyword id="KW-0949">S-adenosyl-L-methionine</keyword>
<keyword id="KW-0784">Thiamine biosynthesis</keyword>
<keyword id="KW-0862">Zinc</keyword>
<sequence length="433" mass="47740">MGIIDEAKRGQITDEMRAISKLEGIPVEKVRNRISEGKIMLIRNAKYPSRKLVPIGKRLTTKVNVNIGTSSEVVDLDMELQKVKVANKWGDTLMDLSTGGDLDAIRRDIIKASDLPVGTVPVYQIFIESFKKKSGGAYFTEDELLNTVEKHLKDGVAFMTIHAGITKDLAIRALKSDRIIPIVSRGGDMIAGWMIHNNSENPYRKNWDYVLEMFKEYDAVISLGDALRPGATGDAHDEFQIGELLETARLVKSALQKGVQVMVEGPGHVPLNEIAWDVKLMKKLTGGVPYYVLGPLPIDVGAPYDHIASAIGAAISSASGVDLLCYLTPAEHLGLPTVKQVEEGAIAYRIAAHAGDVVKLGRKARKWDDEVSYYRGKLDWENMISKLIDPQRAYQVYTQFGTPKVKACTMCGGYCPMMWAMDQVRKIGSSSSL</sequence>
<organism>
    <name type="scientific">Saccharolobus islandicus (strain M.14.25 / Kamchatka #1)</name>
    <name type="common">Sulfolobus islandicus</name>
    <dbReference type="NCBI Taxonomy" id="427317"/>
    <lineage>
        <taxon>Archaea</taxon>
        <taxon>Thermoproteota</taxon>
        <taxon>Thermoprotei</taxon>
        <taxon>Sulfolobales</taxon>
        <taxon>Sulfolobaceae</taxon>
        <taxon>Saccharolobus</taxon>
    </lineage>
</organism>
<protein>
    <recommendedName>
        <fullName evidence="1">Phosphomethylpyrimidine synthase</fullName>
        <ecNumber evidence="1">4.1.99.17</ecNumber>
    </recommendedName>
    <alternativeName>
        <fullName evidence="1">Hydroxymethylpyrimidine phosphate synthase</fullName>
        <shortName evidence="1">HMP-P synthase</shortName>
        <shortName evidence="1">HMP-phosphate synthase</shortName>
        <shortName evidence="1">HMPP synthase</shortName>
    </alternativeName>
    <alternativeName>
        <fullName evidence="1">Thiamine biosynthesis protein ThiC</fullName>
    </alternativeName>
</protein>
<dbReference type="EC" id="4.1.99.17" evidence="1"/>
<dbReference type="EMBL" id="CP001400">
    <property type="protein sequence ID" value="ACP37740.1"/>
    <property type="molecule type" value="Genomic_DNA"/>
</dbReference>
<dbReference type="RefSeq" id="WP_012711006.1">
    <property type="nucleotide sequence ID" value="NC_012588.1"/>
</dbReference>
<dbReference type="SMR" id="C3MX60"/>
<dbReference type="GeneID" id="84052604"/>
<dbReference type="KEGG" id="sia:M1425_0954"/>
<dbReference type="HOGENOM" id="CLU_013181_2_2_2"/>
<dbReference type="UniPathway" id="UPA00060"/>
<dbReference type="Proteomes" id="UP000001350">
    <property type="component" value="Chromosome"/>
</dbReference>
<dbReference type="GO" id="GO:0051539">
    <property type="term" value="F:4 iron, 4 sulfur cluster binding"/>
    <property type="evidence" value="ECO:0007669"/>
    <property type="project" value="UniProtKB-KW"/>
</dbReference>
<dbReference type="GO" id="GO:0016830">
    <property type="term" value="F:carbon-carbon lyase activity"/>
    <property type="evidence" value="ECO:0007669"/>
    <property type="project" value="InterPro"/>
</dbReference>
<dbReference type="GO" id="GO:0008270">
    <property type="term" value="F:zinc ion binding"/>
    <property type="evidence" value="ECO:0007669"/>
    <property type="project" value="UniProtKB-UniRule"/>
</dbReference>
<dbReference type="GO" id="GO:0009228">
    <property type="term" value="P:thiamine biosynthetic process"/>
    <property type="evidence" value="ECO:0007669"/>
    <property type="project" value="UniProtKB-KW"/>
</dbReference>
<dbReference type="GO" id="GO:0009229">
    <property type="term" value="P:thiamine diphosphate biosynthetic process"/>
    <property type="evidence" value="ECO:0007669"/>
    <property type="project" value="UniProtKB-UniRule"/>
</dbReference>
<dbReference type="Gene3D" id="3.20.20.540">
    <property type="entry name" value="Radical SAM ThiC family, central domain"/>
    <property type="match status" value="1"/>
</dbReference>
<dbReference type="HAMAP" id="MF_00089">
    <property type="entry name" value="ThiC"/>
    <property type="match status" value="1"/>
</dbReference>
<dbReference type="InterPro" id="IPR037509">
    <property type="entry name" value="ThiC"/>
</dbReference>
<dbReference type="InterPro" id="IPR038521">
    <property type="entry name" value="ThiC/Bza_core_dom"/>
</dbReference>
<dbReference type="InterPro" id="IPR002817">
    <property type="entry name" value="ThiC/BzaA/B"/>
</dbReference>
<dbReference type="NCBIfam" id="NF009895">
    <property type="entry name" value="PRK13352.1"/>
    <property type="match status" value="1"/>
</dbReference>
<dbReference type="NCBIfam" id="TIGR00190">
    <property type="entry name" value="thiC"/>
    <property type="match status" value="1"/>
</dbReference>
<dbReference type="PANTHER" id="PTHR30557:SF1">
    <property type="entry name" value="PHOSPHOMETHYLPYRIMIDINE SYNTHASE, CHLOROPLASTIC"/>
    <property type="match status" value="1"/>
</dbReference>
<dbReference type="PANTHER" id="PTHR30557">
    <property type="entry name" value="THIAMINE BIOSYNTHESIS PROTEIN THIC"/>
    <property type="match status" value="1"/>
</dbReference>
<dbReference type="Pfam" id="PF01964">
    <property type="entry name" value="ThiC_Rad_SAM"/>
    <property type="match status" value="1"/>
</dbReference>
<dbReference type="SFLD" id="SFLDF00407">
    <property type="entry name" value="phosphomethylpyrimidine_syntha"/>
    <property type="match status" value="1"/>
</dbReference>
<dbReference type="SFLD" id="SFLDS00113">
    <property type="entry name" value="Radical_SAM_Phosphomethylpyrim"/>
    <property type="match status" value="1"/>
</dbReference>
<reference key="1">
    <citation type="journal article" date="2009" name="Proc. Natl. Acad. Sci. U.S.A.">
        <title>Biogeography of the Sulfolobus islandicus pan-genome.</title>
        <authorList>
            <person name="Reno M.L."/>
            <person name="Held N.L."/>
            <person name="Fields C.J."/>
            <person name="Burke P.V."/>
            <person name="Whitaker R.J."/>
        </authorList>
    </citation>
    <scope>NUCLEOTIDE SEQUENCE [LARGE SCALE GENOMIC DNA]</scope>
    <source>
        <strain>M.14.25 / Kamchatka #1</strain>
    </source>
</reference>
<evidence type="ECO:0000255" key="1">
    <source>
        <dbReference type="HAMAP-Rule" id="MF_00089"/>
    </source>
</evidence>
<proteinExistence type="inferred from homology"/>
<gene>
    <name evidence="1" type="primary">thiC</name>
    <name type="ordered locus">M1425_0954</name>
</gene>
<name>THIC_SACI4</name>
<comment type="function">
    <text evidence="1">Catalyzes the synthesis of the hydroxymethylpyrimidine phosphate (HMP-P) moiety of thiamine from aminoimidazole ribotide (AIR) in a radical S-adenosyl-L-methionine (SAM)-dependent reaction.</text>
</comment>
<comment type="catalytic activity">
    <reaction evidence="1">
        <text>5-amino-1-(5-phospho-beta-D-ribosyl)imidazole + S-adenosyl-L-methionine = 4-amino-2-methyl-5-(phosphooxymethyl)pyrimidine + CO + 5'-deoxyadenosine + formate + L-methionine + 3 H(+)</text>
        <dbReference type="Rhea" id="RHEA:24840"/>
        <dbReference type="ChEBI" id="CHEBI:15378"/>
        <dbReference type="ChEBI" id="CHEBI:15740"/>
        <dbReference type="ChEBI" id="CHEBI:17245"/>
        <dbReference type="ChEBI" id="CHEBI:17319"/>
        <dbReference type="ChEBI" id="CHEBI:57844"/>
        <dbReference type="ChEBI" id="CHEBI:58354"/>
        <dbReference type="ChEBI" id="CHEBI:59789"/>
        <dbReference type="ChEBI" id="CHEBI:137981"/>
        <dbReference type="EC" id="4.1.99.17"/>
    </reaction>
</comment>
<comment type="cofactor">
    <cofactor evidence="1">
        <name>[4Fe-4S] cluster</name>
        <dbReference type="ChEBI" id="CHEBI:49883"/>
    </cofactor>
    <text evidence="1">Binds 1 [4Fe-4S] cluster per subunit. The cluster is coordinated with 3 cysteines and an exchangeable S-adenosyl-L-methionine.</text>
</comment>
<comment type="pathway">
    <text evidence="1">Cofactor biosynthesis; thiamine diphosphate biosynthesis.</text>
</comment>
<comment type="similarity">
    <text evidence="1">Belongs to the ThiC family.</text>
</comment>